<proteinExistence type="evidence at transcript level"/>
<sequence>MFFQGEGSIDIPVQDIISWIFDQARYEIEKPVYMDASDTSRSISWRQARTLVRQLAAGLRAAGLKDGDCVCLHSFNDIYYSILVLGIIAAGGIYMGTNPGYTSHELNYHLRVAQAKFVISDPEMLDRMIPAAEGNGIPKDRIWAFTTRESQVVATTGLAHWTALLKHGEADWHRLDDPNHAKTTVVARLFSSGTTGLPKPVDFTHYNIIAQHTLVYDAHPVPFETSRILSLPFFHAAAAPSAHFSTLRLGDPSYVLRRFEPDLFLTTVAKHNITECTAVPPIILTILSHCTTPKYSHSLQSLKIVRCGAAPLDKTTQARFQSLLAPDATFTQVWGMTESSCIATMIPYPESDDTGSVGRLLPGMEAKIINTDGDDITAPDTTGEVCLRGPTIVRGYFNLPSANESAFDKDGFYRTGDLGYCDGKTRKWYLLDRKKDIIKVRGFQVAPAEVEGVLRNHPRIQDVAVVGVYDAEAKTEYPRAYVVRQDQSLREEEVKEFVALRLAKYKRLDGGVRFIDAIPRNASGKILKRLL</sequence>
<comment type="function">
    <text evidence="2">Acyl-CoA ligase; part of the gene cluster that mediates the biosynthesis of azaphilones, a class of fungal metabolites characterized by a highly oxygenated pyrano-quinone bicyclic core and exhibiting a broad range of bioactivities (PubMed:22921072). In the first step, the non-reducing polyketide synthase azaA forms the hexaketide precursor from successive condensations of five malonyl-CoA units, presumably with a simple acetyl-CoA starter unit (PubMed:22921072). The reactive polyketide chain then undergoes a PT-mediated C2-C7 cyclization to afford the aromatic ring and is eventually released as an aldehyde through the R-domain (PubMed:22921072). The putative ketoreductase azaE is proposed to catalyze the reduction of the terminal ketone resulting in the early culture product FK17-P2a (PubMed:22921072). The monooxygenase azaH was demonstrated to be the only enzyme required to convert FK17-P2a to azanigerone E (PubMed:22921072). AzaH first hydroxylates the benzaldehyde intermediate FK17-P2a at C4, which triggers the formation of the pyran-ring to afford azanigerone E (PubMed:22921072). In parallel, the 2,4-dimethylhexanoyl chain is synthesized by the HR-PKS azaB and is proposed to be transferred to the C4-hydroxyl of azanigerone E by the acyltransferase azaD directly from the ACP domain of azaB (PubMed:22921072). Alternatively, the 2,4-dimethyl-hexanoyl chain may be offloaded from the HR-PKS as a carboxylic acid and converted to an acyl-CoA by azaF (PubMed:22921072). The resulting acyl-CoA molecule could then be taken up as a substrate by AzaD to form azanigerone B (PubMed:22921072). To yield the carboxylic acid substituent in azanigerone A, the hydroxypropyl side chain of azanigerone B would need to undergo a C-C oxidative cleavage catalyzed by cytochrome P450 AzaI (PubMed:22921072). AzaI is proposed to act on a vicinal diol that leads to a C-C bond scission either through an alkoxyradical intermediate or a peroxy complex (PubMed:22921072). In the biosynthesis of azanigerone A, azanigerone B first undergoes hydroxylation at C10, possibly catalyzed by one of the two FAD-dependent monooxygenases encoded in the cluster, azaG or azaL, resulting in the vicinal diol azanigerone C (PubMed:22921072). Oxidative cleavage of azanigerone C by azaI would yield the corresponding aldehyde derivative of azanigerone A (PubMed:22921072). Finally, the dehydrogenase azaJ is proposed to convert the aldehyde functional group into the carboxylic acid, completing the conversion from azanigerone B to azanigerone A (PubMed:22921072). Alternatively, the oxidation of aldehyde to carboxylic acid may be catalyzed by the same P450 enzyme azaI via consecutive oxidation or by endogenous alcohol dehydrogenase (PubMed:22921072).</text>
</comment>
<comment type="pathway">
    <text evidence="2">Secondary metabolite biosynthesis.</text>
</comment>
<comment type="induction">
    <text evidence="2">Expression is under the control of the azaphilone cluster-specific transcription factor azaR (PubMed:22921072).</text>
</comment>
<comment type="similarity">
    <text evidence="4">Belongs to the ATP-dependent AMP-binding enzyme family.</text>
</comment>
<gene>
    <name evidence="3" type="primary">azaF</name>
    <name type="ORF">ASPNIDRAFT_188806</name>
</gene>
<feature type="chain" id="PRO_0000437604" description="Acyl-CoA ligase azaF">
    <location>
        <begin position="1"/>
        <end position="531"/>
    </location>
</feature>
<feature type="region of interest" description="AMP-binding" evidence="1">
    <location>
        <begin position="449"/>
        <end position="525"/>
    </location>
</feature>
<feature type="binding site" evidence="1">
    <location>
        <begin position="188"/>
        <end position="199"/>
    </location>
    <ligand>
        <name>AMP</name>
        <dbReference type="ChEBI" id="CHEBI:456215"/>
    </ligand>
</feature>
<protein>
    <recommendedName>
        <fullName evidence="3">Acyl-CoA ligase azaF</fullName>
        <ecNumber evidence="5">6.2.1.-</ecNumber>
    </recommendedName>
    <alternativeName>
        <fullName evidence="3">Azaphilone biosynthesis cluster protein azaF</fullName>
    </alternativeName>
</protein>
<accession>G3XMC0</accession>
<dbReference type="EC" id="6.2.1.-" evidence="5"/>
<dbReference type="EMBL" id="ACJE01000001">
    <property type="protein sequence ID" value="EHA28233.1"/>
    <property type="molecule type" value="Genomic_DNA"/>
</dbReference>
<dbReference type="SMR" id="G3XMC0"/>
<dbReference type="STRING" id="380704.G3XMC0"/>
<dbReference type="HOGENOM" id="CLU_000022_59_2_1"/>
<dbReference type="OrthoDB" id="22772at5052"/>
<dbReference type="Proteomes" id="UP000009038">
    <property type="component" value="Unassembled WGS sequence"/>
</dbReference>
<dbReference type="GO" id="GO:0005524">
    <property type="term" value="F:ATP binding"/>
    <property type="evidence" value="ECO:0007669"/>
    <property type="project" value="UniProtKB-KW"/>
</dbReference>
<dbReference type="GO" id="GO:0016405">
    <property type="term" value="F:CoA-ligase activity"/>
    <property type="evidence" value="ECO:0007669"/>
    <property type="project" value="TreeGrafter"/>
</dbReference>
<dbReference type="GO" id="GO:0019748">
    <property type="term" value="P:secondary metabolic process"/>
    <property type="evidence" value="ECO:0007669"/>
    <property type="project" value="TreeGrafter"/>
</dbReference>
<dbReference type="CDD" id="cd05911">
    <property type="entry name" value="Firefly_Luc_like"/>
    <property type="match status" value="1"/>
</dbReference>
<dbReference type="FunFam" id="3.30.300.30:FF:000007">
    <property type="entry name" value="4-coumarate--CoA ligase 2"/>
    <property type="match status" value="1"/>
</dbReference>
<dbReference type="Gene3D" id="3.30.300.30">
    <property type="match status" value="1"/>
</dbReference>
<dbReference type="Gene3D" id="3.40.50.12780">
    <property type="entry name" value="N-terminal domain of ligase-like"/>
    <property type="match status" value="1"/>
</dbReference>
<dbReference type="InterPro" id="IPR025110">
    <property type="entry name" value="AMP-bd_C"/>
</dbReference>
<dbReference type="InterPro" id="IPR045851">
    <property type="entry name" value="AMP-bd_C_sf"/>
</dbReference>
<dbReference type="InterPro" id="IPR000873">
    <property type="entry name" value="AMP-dep_synth/lig_dom"/>
</dbReference>
<dbReference type="InterPro" id="IPR042099">
    <property type="entry name" value="ANL_N_sf"/>
</dbReference>
<dbReference type="PANTHER" id="PTHR24096:SF265">
    <property type="entry name" value="ENZYME, PUTATIVE (AFU_ORTHOLOGUE AFUA_5G14270)-RELATED"/>
    <property type="match status" value="1"/>
</dbReference>
<dbReference type="PANTHER" id="PTHR24096">
    <property type="entry name" value="LONG-CHAIN-FATTY-ACID--COA LIGASE"/>
    <property type="match status" value="1"/>
</dbReference>
<dbReference type="Pfam" id="PF00501">
    <property type="entry name" value="AMP-binding"/>
    <property type="match status" value="1"/>
</dbReference>
<dbReference type="Pfam" id="PF13193">
    <property type="entry name" value="AMP-binding_C"/>
    <property type="match status" value="1"/>
</dbReference>
<dbReference type="SUPFAM" id="SSF56801">
    <property type="entry name" value="Acetyl-CoA synthetase-like"/>
    <property type="match status" value="1"/>
</dbReference>
<name>AZAF_ASPNA</name>
<evidence type="ECO:0000255" key="1"/>
<evidence type="ECO:0000269" key="2">
    <source>
    </source>
</evidence>
<evidence type="ECO:0000303" key="3">
    <source>
    </source>
</evidence>
<evidence type="ECO:0000305" key="4"/>
<evidence type="ECO:0000305" key="5">
    <source>
    </source>
</evidence>
<organism>
    <name type="scientific">Aspergillus niger (strain ATCC 1015 / CBS 113.46 / FGSC A1144 / LSHB Ac4 / NCTC 3858a / NRRL 328 / USDA 3528.7)</name>
    <dbReference type="NCBI Taxonomy" id="380704"/>
    <lineage>
        <taxon>Eukaryota</taxon>
        <taxon>Fungi</taxon>
        <taxon>Dikarya</taxon>
        <taxon>Ascomycota</taxon>
        <taxon>Pezizomycotina</taxon>
        <taxon>Eurotiomycetes</taxon>
        <taxon>Eurotiomycetidae</taxon>
        <taxon>Eurotiales</taxon>
        <taxon>Aspergillaceae</taxon>
        <taxon>Aspergillus</taxon>
        <taxon>Aspergillus subgen. Circumdati</taxon>
    </lineage>
</organism>
<keyword id="KW-0067">ATP-binding</keyword>
<keyword id="KW-0436">Ligase</keyword>
<keyword id="KW-0547">Nucleotide-binding</keyword>
<reference key="1">
    <citation type="journal article" date="2011" name="Genome Res.">
        <title>Comparative genomics of citric-acid-producing Aspergillus niger ATCC 1015 versus enzyme-producing CBS 513.88.</title>
        <authorList>
            <person name="Andersen M.R."/>
            <person name="Salazar M.P."/>
            <person name="Schaap P.J."/>
            <person name="van de Vondervoort P.J.I."/>
            <person name="Culley D."/>
            <person name="Thykaer J."/>
            <person name="Frisvad J.C."/>
            <person name="Nielsen K.F."/>
            <person name="Albang R."/>
            <person name="Albermann K."/>
            <person name="Berka R.M."/>
            <person name="Braus G.H."/>
            <person name="Braus-Stromeyer S.A."/>
            <person name="Corrochano L.M."/>
            <person name="Dai Z."/>
            <person name="van Dijck P.W.M."/>
            <person name="Hofmann G."/>
            <person name="Lasure L.L."/>
            <person name="Magnuson J.K."/>
            <person name="Menke H."/>
            <person name="Meijer M."/>
            <person name="Meijer S.L."/>
            <person name="Nielsen J.B."/>
            <person name="Nielsen M.L."/>
            <person name="van Ooyen A.J.J."/>
            <person name="Pel H.J."/>
            <person name="Poulsen L."/>
            <person name="Samson R.A."/>
            <person name="Stam H."/>
            <person name="Tsang A."/>
            <person name="van den Brink J.M."/>
            <person name="Atkins A."/>
            <person name="Aerts A."/>
            <person name="Shapiro H."/>
            <person name="Pangilinan J."/>
            <person name="Salamov A."/>
            <person name="Lou Y."/>
            <person name="Lindquist E."/>
            <person name="Lucas S."/>
            <person name="Grimwood J."/>
            <person name="Grigoriev I.V."/>
            <person name="Kubicek C.P."/>
            <person name="Martinez D."/>
            <person name="van Peij N.N.M.E."/>
            <person name="Roubos J.A."/>
            <person name="Nielsen J."/>
            <person name="Baker S.E."/>
        </authorList>
    </citation>
    <scope>NUCLEOTIDE SEQUENCE [LARGE SCALE GENOMIC DNA]</scope>
    <source>
        <strain>ATCC 1015 / CBS 113.46 / FGSC A1144 / LSHB Ac4 / NCTC 3858a / NRRL 328 / USDA 3528.7</strain>
    </source>
</reference>
<reference key="2">
    <citation type="journal article" date="2012" name="Chem. Biol.">
        <title>Characterization of a silent azaphilone gene cluster from Aspergillus niger ATCC 1015 reveals a hydroxylation-mediated pyran-ring formation.</title>
        <authorList>
            <person name="Zabala A.O."/>
            <person name="Xu W."/>
            <person name="Chooi Y.H."/>
            <person name="Tang Y."/>
        </authorList>
    </citation>
    <scope>FUNCTION</scope>
    <scope>INDUCTION</scope>
</reference>